<reference key="1">
    <citation type="journal article" date="2010" name="Genome Biol.">
        <title>Structure and dynamics of the pan-genome of Streptococcus pneumoniae and closely related species.</title>
        <authorList>
            <person name="Donati C."/>
            <person name="Hiller N.L."/>
            <person name="Tettelin H."/>
            <person name="Muzzi A."/>
            <person name="Croucher N.J."/>
            <person name="Angiuoli S.V."/>
            <person name="Oggioni M."/>
            <person name="Dunning Hotopp J.C."/>
            <person name="Hu F.Z."/>
            <person name="Riley D.R."/>
            <person name="Covacci A."/>
            <person name="Mitchell T.J."/>
            <person name="Bentley S.D."/>
            <person name="Kilian M."/>
            <person name="Ehrlich G.D."/>
            <person name="Rappuoli R."/>
            <person name="Moxon E.R."/>
            <person name="Masignani V."/>
        </authorList>
    </citation>
    <scope>NUCLEOTIDE SEQUENCE [LARGE SCALE GENOMIC DNA]</scope>
    <source>
        <strain>Hungary19A-6</strain>
    </source>
</reference>
<sequence>MANKKIRIRLKAYEHRTLDTAAAKIVESATRTGAQVAGPIPLPTERSLYTIIRATHKYKDSREQFEMRTHKRLIDIVNPTQKTVDALMKLDLPSGVNVEIKL</sequence>
<accession>B1I8J7</accession>
<dbReference type="EMBL" id="CP000936">
    <property type="protein sequence ID" value="ACA37263.1"/>
    <property type="molecule type" value="Genomic_DNA"/>
</dbReference>
<dbReference type="RefSeq" id="WP_001284513.1">
    <property type="nucleotide sequence ID" value="NC_010380.1"/>
</dbReference>
<dbReference type="SMR" id="B1I8J7"/>
<dbReference type="GeneID" id="93738956"/>
<dbReference type="KEGG" id="spv:SPH_0322"/>
<dbReference type="HOGENOM" id="CLU_122625_1_3_9"/>
<dbReference type="Proteomes" id="UP000002163">
    <property type="component" value="Chromosome"/>
</dbReference>
<dbReference type="GO" id="GO:1990904">
    <property type="term" value="C:ribonucleoprotein complex"/>
    <property type="evidence" value="ECO:0007669"/>
    <property type="project" value="UniProtKB-KW"/>
</dbReference>
<dbReference type="GO" id="GO:0005840">
    <property type="term" value="C:ribosome"/>
    <property type="evidence" value="ECO:0007669"/>
    <property type="project" value="UniProtKB-KW"/>
</dbReference>
<dbReference type="GO" id="GO:0003735">
    <property type="term" value="F:structural constituent of ribosome"/>
    <property type="evidence" value="ECO:0007669"/>
    <property type="project" value="InterPro"/>
</dbReference>
<dbReference type="GO" id="GO:0000049">
    <property type="term" value="F:tRNA binding"/>
    <property type="evidence" value="ECO:0007669"/>
    <property type="project" value="UniProtKB-UniRule"/>
</dbReference>
<dbReference type="GO" id="GO:0006412">
    <property type="term" value="P:translation"/>
    <property type="evidence" value="ECO:0007669"/>
    <property type="project" value="UniProtKB-UniRule"/>
</dbReference>
<dbReference type="FunFam" id="3.30.70.600:FF:000001">
    <property type="entry name" value="30S ribosomal protein S10"/>
    <property type="match status" value="1"/>
</dbReference>
<dbReference type="Gene3D" id="3.30.70.600">
    <property type="entry name" value="Ribosomal protein S10 domain"/>
    <property type="match status" value="1"/>
</dbReference>
<dbReference type="HAMAP" id="MF_00508">
    <property type="entry name" value="Ribosomal_uS10"/>
    <property type="match status" value="1"/>
</dbReference>
<dbReference type="InterPro" id="IPR001848">
    <property type="entry name" value="Ribosomal_uS10"/>
</dbReference>
<dbReference type="InterPro" id="IPR018268">
    <property type="entry name" value="Ribosomal_uS10_CS"/>
</dbReference>
<dbReference type="InterPro" id="IPR027486">
    <property type="entry name" value="Ribosomal_uS10_dom"/>
</dbReference>
<dbReference type="InterPro" id="IPR036838">
    <property type="entry name" value="Ribosomal_uS10_dom_sf"/>
</dbReference>
<dbReference type="NCBIfam" id="NF001861">
    <property type="entry name" value="PRK00596.1"/>
    <property type="match status" value="1"/>
</dbReference>
<dbReference type="NCBIfam" id="TIGR01049">
    <property type="entry name" value="rpsJ_bact"/>
    <property type="match status" value="1"/>
</dbReference>
<dbReference type="PANTHER" id="PTHR11700">
    <property type="entry name" value="30S RIBOSOMAL PROTEIN S10 FAMILY MEMBER"/>
    <property type="match status" value="1"/>
</dbReference>
<dbReference type="Pfam" id="PF00338">
    <property type="entry name" value="Ribosomal_S10"/>
    <property type="match status" value="1"/>
</dbReference>
<dbReference type="PRINTS" id="PR00971">
    <property type="entry name" value="RIBOSOMALS10"/>
</dbReference>
<dbReference type="SMART" id="SM01403">
    <property type="entry name" value="Ribosomal_S10"/>
    <property type="match status" value="1"/>
</dbReference>
<dbReference type="SUPFAM" id="SSF54999">
    <property type="entry name" value="Ribosomal protein S10"/>
    <property type="match status" value="1"/>
</dbReference>
<dbReference type="PROSITE" id="PS00361">
    <property type="entry name" value="RIBOSOMAL_S10"/>
    <property type="match status" value="1"/>
</dbReference>
<evidence type="ECO:0000255" key="1">
    <source>
        <dbReference type="HAMAP-Rule" id="MF_00508"/>
    </source>
</evidence>
<evidence type="ECO:0000305" key="2"/>
<keyword id="KW-0687">Ribonucleoprotein</keyword>
<keyword id="KW-0689">Ribosomal protein</keyword>
<feature type="chain" id="PRO_1000127190" description="Small ribosomal subunit protein uS10">
    <location>
        <begin position="1"/>
        <end position="102"/>
    </location>
</feature>
<protein>
    <recommendedName>
        <fullName evidence="1">Small ribosomal subunit protein uS10</fullName>
    </recommendedName>
    <alternativeName>
        <fullName evidence="2">30S ribosomal protein S10</fullName>
    </alternativeName>
</protein>
<proteinExistence type="inferred from homology"/>
<gene>
    <name evidence="1" type="primary">rpsJ</name>
    <name type="ordered locus">SPH_0322</name>
</gene>
<name>RS10_STRPI</name>
<organism>
    <name type="scientific">Streptococcus pneumoniae (strain Hungary19A-6)</name>
    <dbReference type="NCBI Taxonomy" id="487214"/>
    <lineage>
        <taxon>Bacteria</taxon>
        <taxon>Bacillati</taxon>
        <taxon>Bacillota</taxon>
        <taxon>Bacilli</taxon>
        <taxon>Lactobacillales</taxon>
        <taxon>Streptococcaceae</taxon>
        <taxon>Streptococcus</taxon>
    </lineage>
</organism>
<comment type="function">
    <text evidence="1">Involved in the binding of tRNA to the ribosomes.</text>
</comment>
<comment type="subunit">
    <text evidence="1">Part of the 30S ribosomal subunit.</text>
</comment>
<comment type="similarity">
    <text evidence="1">Belongs to the universal ribosomal protein uS10 family.</text>
</comment>